<evidence type="ECO:0000250" key="1">
    <source>
        <dbReference type="UniProtKB" id="Q8BZM1"/>
    </source>
</evidence>
<evidence type="ECO:0000269" key="2">
    <source>
    </source>
</evidence>
<evidence type="ECO:0000269" key="3">
    <source>
    </source>
</evidence>
<evidence type="ECO:0000269" key="4">
    <source>
    </source>
</evidence>
<evidence type="ECO:0000269" key="5">
    <source>
    </source>
</evidence>
<evidence type="ECO:0000269" key="6">
    <source>
    </source>
</evidence>
<evidence type="ECO:0000269" key="7">
    <source>
    </source>
</evidence>
<evidence type="ECO:0000269" key="8">
    <source>
    </source>
</evidence>
<evidence type="ECO:0000269" key="9">
    <source>
    </source>
</evidence>
<evidence type="ECO:0000303" key="10">
    <source>
    </source>
</evidence>
<evidence type="ECO:0000303" key="11">
    <source>
    </source>
</evidence>
<evidence type="ECO:0007744" key="12">
    <source>
        <dbReference type="PDB" id="4F52"/>
    </source>
</evidence>
<evidence type="ECO:0007744" key="13">
    <source>
    </source>
</evidence>
<evidence type="ECO:0007744" key="14">
    <source>
    </source>
</evidence>
<evidence type="ECO:0007744" key="15">
    <source>
    </source>
</evidence>
<evidence type="ECO:0007829" key="16">
    <source>
        <dbReference type="PDB" id="4F52"/>
    </source>
</evidence>
<organism>
    <name type="scientific">Homo sapiens</name>
    <name type="common">Human</name>
    <dbReference type="NCBI Taxonomy" id="9606"/>
    <lineage>
        <taxon>Eukaryota</taxon>
        <taxon>Metazoa</taxon>
        <taxon>Chordata</taxon>
        <taxon>Craniata</taxon>
        <taxon>Vertebrata</taxon>
        <taxon>Euteleostomi</taxon>
        <taxon>Mammalia</taxon>
        <taxon>Eutheria</taxon>
        <taxon>Euarchontoglires</taxon>
        <taxon>Primates</taxon>
        <taxon>Haplorrhini</taxon>
        <taxon>Catarrhini</taxon>
        <taxon>Hominidae</taxon>
        <taxon>Homo</taxon>
    </lineage>
</organism>
<gene>
    <name type="primary">GLMN</name>
    <name evidence="11" type="synonym">FAP48</name>
    <name evidence="10" type="synonym">FAP68</name>
    <name type="synonym">VMGLOM</name>
</gene>
<feature type="initiator methionine" description="Removed" evidence="13 14 15">
    <location>
        <position position="1"/>
    </location>
</feature>
<feature type="chain" id="PRO_0000087513" description="Glomulin">
    <location>
        <begin position="2"/>
        <end position="594"/>
    </location>
</feature>
<feature type="region of interest" description="Alpha-helical region with structural similarity to HEAT repeats" evidence="8">
    <location>
        <begin position="2"/>
        <end position="553"/>
    </location>
</feature>
<feature type="region of interest" description="Important for interaction with RBX1" evidence="8">
    <location>
        <begin position="300"/>
        <end position="594"/>
    </location>
</feature>
<feature type="modified residue" description="N-acetylalanine" evidence="13 14 15">
    <location>
        <position position="2"/>
    </location>
</feature>
<feature type="splice variant" id="VSP_008882" description="In isoform 2." evidence="11">
    <original>CLLNTSNHSGVE</original>
    <variation>EHVTTNGLQDHS</variation>
    <location>
        <begin position="406"/>
        <end position="417"/>
    </location>
</feature>
<feature type="splice variant" id="VSP_008883" description="In isoform 2." evidence="11">
    <location>
        <begin position="418"/>
        <end position="594"/>
    </location>
</feature>
<feature type="sequence variant" id="VAR_061653" description="In dbSNP:rs35258161.">
    <original>L</original>
    <variation>S</variation>
    <location>
        <position position="336"/>
    </location>
</feature>
<feature type="sequence variant" id="VAR_017241" description="In GVMs; loss of interaction with CUL1 and RBX1; dbSNP:rs773442562." evidence="4 7">
    <location>
        <position position="393"/>
    </location>
</feature>
<feature type="mutagenesis site" description="Loss of interaction with FKBP4 and FKBP1A." evidence="2">
    <original>P</original>
    <variation>A</variation>
    <location>
        <position position="219"/>
    </location>
</feature>
<feature type="mutagenesis site" description="Disrupts interaction with RBX1. Loss of inhibition of SCF (SKP1-Cullin-F-box protein) E3 ubiquitin-protein ligase activity." evidence="8">
    <original>K</original>
    <variation>A</variation>
    <location>
        <position position="425"/>
    </location>
</feature>
<feature type="mutagenesis site" description="Disrupts interaction with RBX1. Loss of inhibition of SCF (SKP1-Cullin-F-box protein) E3 ubiquitin-protein ligase activity." evidence="8">
    <original>N</original>
    <variation>A</variation>
    <location>
        <position position="476"/>
    </location>
</feature>
<feature type="mutagenesis site" description="Disrupts interaction with RBX1. Loss of inhibition of SCF (SKP1-Cullin-F-box protein) E3 ubiquitin-protein ligase activity." evidence="8">
    <original>L</original>
    <variation>A</variation>
    <location>
        <position position="567"/>
    </location>
</feature>
<feature type="mutagenesis site" description="Disrupts interaction with RBX1. Loss of inhibition of SCF (SKP1-Cullin-F-box protein) E3 ubiquitin-protein ligase activity." evidence="8">
    <original>R</original>
    <variation>A</variation>
    <location>
        <position position="574"/>
    </location>
</feature>
<feature type="helix" evidence="16">
    <location>
        <begin position="2"/>
        <end position="13"/>
    </location>
</feature>
<feature type="helix" evidence="16">
    <location>
        <begin position="28"/>
        <end position="37"/>
    </location>
</feature>
<feature type="strand" evidence="16">
    <location>
        <begin position="38"/>
        <end position="40"/>
    </location>
</feature>
<feature type="helix" evidence="16">
    <location>
        <begin position="43"/>
        <end position="49"/>
    </location>
</feature>
<feature type="helix" evidence="16">
    <location>
        <begin position="55"/>
        <end position="60"/>
    </location>
</feature>
<feature type="helix" evidence="16">
    <location>
        <begin position="62"/>
        <end position="65"/>
    </location>
</feature>
<feature type="helix" evidence="16">
    <location>
        <begin position="66"/>
        <end position="74"/>
    </location>
</feature>
<feature type="strand" evidence="16">
    <location>
        <begin position="80"/>
        <end position="82"/>
    </location>
</feature>
<feature type="helix" evidence="16">
    <location>
        <begin position="84"/>
        <end position="96"/>
    </location>
</feature>
<feature type="helix" evidence="16">
    <location>
        <begin position="99"/>
        <end position="101"/>
    </location>
</feature>
<feature type="helix" evidence="16">
    <location>
        <begin position="102"/>
        <end position="106"/>
    </location>
</feature>
<feature type="helix" evidence="16">
    <location>
        <begin position="107"/>
        <end position="110"/>
    </location>
</feature>
<feature type="helix" evidence="16">
    <location>
        <begin position="115"/>
        <end position="117"/>
    </location>
</feature>
<feature type="helix" evidence="16">
    <location>
        <begin position="118"/>
        <end position="135"/>
    </location>
</feature>
<feature type="helix" evidence="16">
    <location>
        <begin position="140"/>
        <end position="156"/>
    </location>
</feature>
<feature type="helix" evidence="16">
    <location>
        <begin position="173"/>
        <end position="192"/>
    </location>
</feature>
<feature type="helix" evidence="16">
    <location>
        <begin position="199"/>
        <end position="222"/>
    </location>
</feature>
<feature type="helix" evidence="16">
    <location>
        <begin position="236"/>
        <end position="250"/>
    </location>
</feature>
<feature type="strand" evidence="16">
    <location>
        <begin position="251"/>
        <end position="253"/>
    </location>
</feature>
<feature type="helix" evidence="16">
    <location>
        <begin position="255"/>
        <end position="257"/>
    </location>
</feature>
<feature type="helix" evidence="16">
    <location>
        <begin position="283"/>
        <end position="294"/>
    </location>
</feature>
<feature type="turn" evidence="16">
    <location>
        <begin position="298"/>
        <end position="302"/>
    </location>
</feature>
<feature type="helix" evidence="16">
    <location>
        <begin position="309"/>
        <end position="324"/>
    </location>
</feature>
<feature type="helix" evidence="16">
    <location>
        <begin position="329"/>
        <end position="344"/>
    </location>
</feature>
<feature type="helix" evidence="16">
    <location>
        <begin position="353"/>
        <end position="357"/>
    </location>
</feature>
<feature type="helix" evidence="16">
    <location>
        <begin position="359"/>
        <end position="374"/>
    </location>
</feature>
<feature type="helix" evidence="16">
    <location>
        <begin position="378"/>
        <end position="394"/>
    </location>
</feature>
<feature type="helix" evidence="16">
    <location>
        <begin position="397"/>
        <end position="411"/>
    </location>
</feature>
<feature type="helix" evidence="16">
    <location>
        <begin position="414"/>
        <end position="430"/>
    </location>
</feature>
<feature type="turn" evidence="16">
    <location>
        <begin position="440"/>
        <end position="442"/>
    </location>
</feature>
<feature type="helix" evidence="16">
    <location>
        <begin position="444"/>
        <end position="453"/>
    </location>
</feature>
<feature type="turn" evidence="16">
    <location>
        <begin position="457"/>
        <end position="461"/>
    </location>
</feature>
<feature type="turn" evidence="16">
    <location>
        <begin position="464"/>
        <end position="466"/>
    </location>
</feature>
<feature type="helix" evidence="16">
    <location>
        <begin position="468"/>
        <end position="484"/>
    </location>
</feature>
<feature type="turn" evidence="16">
    <location>
        <begin position="487"/>
        <end position="489"/>
    </location>
</feature>
<feature type="helix" evidence="16">
    <location>
        <begin position="494"/>
        <end position="496"/>
    </location>
</feature>
<feature type="helix" evidence="16">
    <location>
        <begin position="498"/>
        <end position="504"/>
    </location>
</feature>
<feature type="helix" evidence="16">
    <location>
        <begin position="506"/>
        <end position="533"/>
    </location>
</feature>
<feature type="helix" evidence="16">
    <location>
        <begin position="553"/>
        <end position="555"/>
    </location>
</feature>
<feature type="helix" evidence="16">
    <location>
        <begin position="556"/>
        <end position="581"/>
    </location>
</feature>
<reference key="1">
    <citation type="journal article" date="1996" name="J. Biol. Chem.">
        <title>FAP48, a new protein that forms specific complexes with both immunophilins FKBP59 and FKBP12. Prevention by the immunosuppressant drugs FK506 and rapamycin.</title>
        <authorList>
            <person name="Chambraud B."/>
            <person name="Radanyi C."/>
            <person name="Camonis J.H."/>
            <person name="Shazand K."/>
            <person name="Rajkowski K."/>
            <person name="Baulieu E.-E."/>
        </authorList>
    </citation>
    <scope>NUCLEOTIDE SEQUENCE [MRNA] (ISOFORM 2)</scope>
    <scope>INTERACTION WITH FKBP4 AND FKBP1A</scope>
    <source>
        <tissue>Leukemia</tissue>
    </source>
</reference>
<reference key="2">
    <citation type="journal article" date="2001" name="J. Biol. Chem.">
        <title>Ligand-regulated binding of FAP68 to the hepatocyte growth factor receptor.</title>
        <authorList>
            <person name="Grisendi S."/>
            <person name="Chambraud B."/>
            <person name="Gout I."/>
            <person name="Comoglio P.M."/>
            <person name="Crepaldi T."/>
        </authorList>
    </citation>
    <scope>NUCLEOTIDE SEQUENCE [MRNA] (ISOFORM 1)</scope>
    <scope>FUNCTION</scope>
    <scope>PHOSPHORYLATION</scope>
    <scope>INTERACTION WITH MET</scope>
</reference>
<reference key="3">
    <citation type="journal article" date="2002" name="Am. J. Hum. Genet.">
        <title>Mutations in a novel factor, glomulin, are responsible for glomuvenous malformations ('glomangiomas').</title>
        <authorList>
            <person name="Brouillard P."/>
            <person name="Boon L.M."/>
            <person name="Mulliken J.B."/>
            <person name="Enjolras O."/>
            <person name="Ghassibe M."/>
            <person name="Warman M.L."/>
            <person name="Tan O.T."/>
            <person name="Olsen B.R."/>
            <person name="Vikkula M."/>
        </authorList>
    </citation>
    <scope>NUCLEOTIDE SEQUENCE [GENOMIC DNA / MRNA] (ISOFORM 1)</scope>
    <scope>FUNCTION</scope>
    <scope>TISSUE SPECIFICITY</scope>
    <scope>VARIANT GVMS ASN-393 DEL</scope>
</reference>
<reference key="4">
    <citation type="journal article" date="2006" name="Nature">
        <title>The DNA sequence and biological annotation of human chromosome 1.</title>
        <authorList>
            <person name="Gregory S.G."/>
            <person name="Barlow K.F."/>
            <person name="McLay K.E."/>
            <person name="Kaul R."/>
            <person name="Swarbreck D."/>
            <person name="Dunham A."/>
            <person name="Scott C.E."/>
            <person name="Howe K.L."/>
            <person name="Woodfine K."/>
            <person name="Spencer C.C.A."/>
            <person name="Jones M.C."/>
            <person name="Gillson C."/>
            <person name="Searle S."/>
            <person name="Zhou Y."/>
            <person name="Kokocinski F."/>
            <person name="McDonald L."/>
            <person name="Evans R."/>
            <person name="Phillips K."/>
            <person name="Atkinson A."/>
            <person name="Cooper R."/>
            <person name="Jones C."/>
            <person name="Hall R.E."/>
            <person name="Andrews T.D."/>
            <person name="Lloyd C."/>
            <person name="Ainscough R."/>
            <person name="Almeida J.P."/>
            <person name="Ambrose K.D."/>
            <person name="Anderson F."/>
            <person name="Andrew R.W."/>
            <person name="Ashwell R.I.S."/>
            <person name="Aubin K."/>
            <person name="Babbage A.K."/>
            <person name="Bagguley C.L."/>
            <person name="Bailey J."/>
            <person name="Beasley H."/>
            <person name="Bethel G."/>
            <person name="Bird C.P."/>
            <person name="Bray-Allen S."/>
            <person name="Brown J.Y."/>
            <person name="Brown A.J."/>
            <person name="Buckley D."/>
            <person name="Burton J."/>
            <person name="Bye J."/>
            <person name="Carder C."/>
            <person name="Chapman J.C."/>
            <person name="Clark S.Y."/>
            <person name="Clarke G."/>
            <person name="Clee C."/>
            <person name="Cobley V."/>
            <person name="Collier R.E."/>
            <person name="Corby N."/>
            <person name="Coville G.J."/>
            <person name="Davies J."/>
            <person name="Deadman R."/>
            <person name="Dunn M."/>
            <person name="Earthrowl M."/>
            <person name="Ellington A.G."/>
            <person name="Errington H."/>
            <person name="Frankish A."/>
            <person name="Frankland J."/>
            <person name="French L."/>
            <person name="Garner P."/>
            <person name="Garnett J."/>
            <person name="Gay L."/>
            <person name="Ghori M.R.J."/>
            <person name="Gibson R."/>
            <person name="Gilby L.M."/>
            <person name="Gillett W."/>
            <person name="Glithero R.J."/>
            <person name="Grafham D.V."/>
            <person name="Griffiths C."/>
            <person name="Griffiths-Jones S."/>
            <person name="Grocock R."/>
            <person name="Hammond S."/>
            <person name="Harrison E.S.I."/>
            <person name="Hart E."/>
            <person name="Haugen E."/>
            <person name="Heath P.D."/>
            <person name="Holmes S."/>
            <person name="Holt K."/>
            <person name="Howden P.J."/>
            <person name="Hunt A.R."/>
            <person name="Hunt S.E."/>
            <person name="Hunter G."/>
            <person name="Isherwood J."/>
            <person name="James R."/>
            <person name="Johnson C."/>
            <person name="Johnson D."/>
            <person name="Joy A."/>
            <person name="Kay M."/>
            <person name="Kershaw J.K."/>
            <person name="Kibukawa M."/>
            <person name="Kimberley A.M."/>
            <person name="King A."/>
            <person name="Knights A.J."/>
            <person name="Lad H."/>
            <person name="Laird G."/>
            <person name="Lawlor S."/>
            <person name="Leongamornlert D.A."/>
            <person name="Lloyd D.M."/>
            <person name="Loveland J."/>
            <person name="Lovell J."/>
            <person name="Lush M.J."/>
            <person name="Lyne R."/>
            <person name="Martin S."/>
            <person name="Mashreghi-Mohammadi M."/>
            <person name="Matthews L."/>
            <person name="Matthews N.S.W."/>
            <person name="McLaren S."/>
            <person name="Milne S."/>
            <person name="Mistry S."/>
            <person name="Moore M.J.F."/>
            <person name="Nickerson T."/>
            <person name="O'Dell C.N."/>
            <person name="Oliver K."/>
            <person name="Palmeiri A."/>
            <person name="Palmer S.A."/>
            <person name="Parker A."/>
            <person name="Patel D."/>
            <person name="Pearce A.V."/>
            <person name="Peck A.I."/>
            <person name="Pelan S."/>
            <person name="Phelps K."/>
            <person name="Phillimore B.J."/>
            <person name="Plumb R."/>
            <person name="Rajan J."/>
            <person name="Raymond C."/>
            <person name="Rouse G."/>
            <person name="Saenphimmachak C."/>
            <person name="Sehra H.K."/>
            <person name="Sheridan E."/>
            <person name="Shownkeen R."/>
            <person name="Sims S."/>
            <person name="Skuce C.D."/>
            <person name="Smith M."/>
            <person name="Steward C."/>
            <person name="Subramanian S."/>
            <person name="Sycamore N."/>
            <person name="Tracey A."/>
            <person name="Tromans A."/>
            <person name="Van Helmond Z."/>
            <person name="Wall M."/>
            <person name="Wallis J.M."/>
            <person name="White S."/>
            <person name="Whitehead S.L."/>
            <person name="Wilkinson J.E."/>
            <person name="Willey D.L."/>
            <person name="Williams H."/>
            <person name="Wilming L."/>
            <person name="Wray P.W."/>
            <person name="Wu Z."/>
            <person name="Coulson A."/>
            <person name="Vaudin M."/>
            <person name="Sulston J.E."/>
            <person name="Durbin R.M."/>
            <person name="Hubbard T."/>
            <person name="Wooster R."/>
            <person name="Dunham I."/>
            <person name="Carter N.P."/>
            <person name="McVean G."/>
            <person name="Ross M.T."/>
            <person name="Harrow J."/>
            <person name="Olson M.V."/>
            <person name="Beck S."/>
            <person name="Rogers J."/>
            <person name="Bentley D.R."/>
        </authorList>
    </citation>
    <scope>NUCLEOTIDE SEQUENCE [LARGE SCALE GENOMIC DNA]</scope>
</reference>
<reference key="5">
    <citation type="submission" date="2005-09" db="EMBL/GenBank/DDBJ databases">
        <authorList>
            <person name="Mural R.J."/>
            <person name="Istrail S."/>
            <person name="Sutton G.G."/>
            <person name="Florea L."/>
            <person name="Halpern A.L."/>
            <person name="Mobarry C.M."/>
            <person name="Lippert R."/>
            <person name="Walenz B."/>
            <person name="Shatkay H."/>
            <person name="Dew I."/>
            <person name="Miller J.R."/>
            <person name="Flanigan M.J."/>
            <person name="Edwards N.J."/>
            <person name="Bolanos R."/>
            <person name="Fasulo D."/>
            <person name="Halldorsson B.V."/>
            <person name="Hannenhalli S."/>
            <person name="Turner R."/>
            <person name="Yooseph S."/>
            <person name="Lu F."/>
            <person name="Nusskern D.R."/>
            <person name="Shue B.C."/>
            <person name="Zheng X.H."/>
            <person name="Zhong F."/>
            <person name="Delcher A.L."/>
            <person name="Huson D.H."/>
            <person name="Kravitz S.A."/>
            <person name="Mouchard L."/>
            <person name="Reinert K."/>
            <person name="Remington K.A."/>
            <person name="Clark A.G."/>
            <person name="Waterman M.S."/>
            <person name="Eichler E.E."/>
            <person name="Adams M.D."/>
            <person name="Hunkapiller M.W."/>
            <person name="Myers E.W."/>
            <person name="Venter J.C."/>
        </authorList>
    </citation>
    <scope>NUCLEOTIDE SEQUENCE [LARGE SCALE GENOMIC DNA]</scope>
</reference>
<reference key="6">
    <citation type="journal article" date="2004" name="Genome Res.">
        <title>The status, quality, and expansion of the NIH full-length cDNA project: the Mammalian Gene Collection (MGC).</title>
        <authorList>
            <consortium name="The MGC Project Team"/>
        </authorList>
    </citation>
    <scope>NUCLEOTIDE SEQUENCE [LARGE SCALE MRNA]</scope>
    <source>
        <tissue>Placenta</tissue>
    </source>
</reference>
<reference key="7">
    <citation type="journal article" date="2003" name="Proc. Natl. Acad. Sci. U.S.A.">
        <title>The FKBP-associated protein FAP48 is an antiproliferative molecule and a player in T cell activation that increases IL2 synthesis.</title>
        <authorList>
            <person name="Krummrei U."/>
            <person name="Baulieu E.-E."/>
            <person name="Chambraud B."/>
        </authorList>
    </citation>
    <scope>INTERACTION WITH FKBP4</scope>
</reference>
<reference key="8">
    <citation type="journal article" date="2001" name="Regul. Pept.">
        <title>Mutation of FKBP associated protein 48 (FAP48) at proline 219 disrupts the interaction with FKBP12 and FKBP52.</title>
        <authorList>
            <person name="Neye H."/>
        </authorList>
    </citation>
    <scope>INTERACTION WITH FKBP4 AND FKBP1A</scope>
    <scope>MUTAGENESIS OF PRO-219</scope>
</reference>
<reference key="9">
    <citation type="journal article" date="2003" name="Proc. Natl. Acad. Sci. U.S.A.">
        <title>Targeted disruption of p185/Cul7 gene results in abnormal vascular morphogenesis.</title>
        <authorList>
            <person name="Arai T."/>
            <person name="Kasper J.S."/>
            <person name="Skaar J.R."/>
            <person name="Ali S.H."/>
            <person name="Takahashi C."/>
            <person name="DeCaprio J.A."/>
        </authorList>
    </citation>
    <scope>IDENTIFICATION IN A COMPLEX WITH CUL7; SKP1; FBXW8 AND RBX1</scope>
    <scope>IDENTIFICATION BY MASS SPECTROMETRY</scope>
</reference>
<reference key="10">
    <citation type="journal article" date="2009" name="Anal. Chem.">
        <title>Lys-N and trypsin cover complementary parts of the phosphoproteome in a refined SCX-based approach.</title>
        <authorList>
            <person name="Gauci S."/>
            <person name="Helbig A.O."/>
            <person name="Slijper M."/>
            <person name="Krijgsveld J."/>
            <person name="Heck A.J."/>
            <person name="Mohammed S."/>
        </authorList>
    </citation>
    <scope>ACETYLATION [LARGE SCALE ANALYSIS] AT ALA-2</scope>
    <scope>CLEAVAGE OF INITIATOR METHIONINE [LARGE SCALE ANALYSIS]</scope>
    <scope>IDENTIFICATION BY MASS SPECTROMETRY [LARGE SCALE ANALYSIS]</scope>
</reference>
<reference key="11">
    <citation type="journal article" date="2011" name="BMC Syst. Biol.">
        <title>Initial characterization of the human central proteome.</title>
        <authorList>
            <person name="Burkard T.R."/>
            <person name="Planyavsky M."/>
            <person name="Kaupe I."/>
            <person name="Breitwieser F.P."/>
            <person name="Buerckstuemmer T."/>
            <person name="Bennett K.L."/>
            <person name="Superti-Furga G."/>
            <person name="Colinge J."/>
        </authorList>
    </citation>
    <scope>IDENTIFICATION BY MASS SPECTROMETRY [LARGE SCALE ANALYSIS]</scope>
</reference>
<reference key="12">
    <citation type="journal article" date="2012" name="Mol. Cell">
        <title>The glomuvenous malformation protein Glomulin binds Rbx1 and regulates cullin RING ligase-mediated turnover of Fbw7.</title>
        <authorList>
            <person name="Tron A.E."/>
            <person name="Arai T."/>
            <person name="Duda D.M."/>
            <person name="Kuwabara H."/>
            <person name="Olszewski J.L."/>
            <person name="Fujiwara Y."/>
            <person name="Bahamon B.N."/>
            <person name="Signoretti S."/>
            <person name="Schulman B.A."/>
            <person name="DeCaprio J.A."/>
        </authorList>
    </citation>
    <scope>FUNCTION (ISOFORM 1)</scope>
    <scope>INTERACTION WITH RBX1</scope>
    <scope>IDENTIFICATION IN A COMPLEX WITH RBX1 AND A CULLIN</scope>
    <scope>CHARACTERIZATION OF VARIANT GVMS ASN-393 DEL</scope>
</reference>
<reference key="13">
    <citation type="journal article" date="2012" name="Mol. Cell. Proteomics">
        <title>Comparative large-scale characterisation of plant vs. mammal proteins reveals similar and idiosyncratic N-alpha acetylation features.</title>
        <authorList>
            <person name="Bienvenut W.V."/>
            <person name="Sumpton D."/>
            <person name="Martinez A."/>
            <person name="Lilla S."/>
            <person name="Espagne C."/>
            <person name="Meinnel T."/>
            <person name="Giglione C."/>
        </authorList>
    </citation>
    <scope>ACETYLATION [LARGE SCALE ANALYSIS] AT ALA-2</scope>
    <scope>CLEAVAGE OF INITIATOR METHIONINE [LARGE SCALE ANALYSIS]</scope>
    <scope>IDENTIFICATION BY MASS SPECTROMETRY [LARGE SCALE ANALYSIS]</scope>
</reference>
<reference key="14">
    <citation type="journal article" date="2012" name="Proc. Natl. Acad. Sci. U.S.A.">
        <title>N-terminal acetylome analyses and functional insights of the N-terminal acetyltransferase NatB.</title>
        <authorList>
            <person name="Van Damme P."/>
            <person name="Lasa M."/>
            <person name="Polevoda B."/>
            <person name="Gazquez C."/>
            <person name="Elosegui-Artola A."/>
            <person name="Kim D.S."/>
            <person name="De Juan-Pardo E."/>
            <person name="Demeyer K."/>
            <person name="Hole K."/>
            <person name="Larrea E."/>
            <person name="Timmerman E."/>
            <person name="Prieto J."/>
            <person name="Arnesen T."/>
            <person name="Sherman F."/>
            <person name="Gevaert K."/>
            <person name="Aldabe R."/>
        </authorList>
    </citation>
    <scope>ACETYLATION [LARGE SCALE ANALYSIS] AT ALA-2</scope>
    <scope>CLEAVAGE OF INITIATOR METHIONINE [LARGE SCALE ANALYSIS]</scope>
    <scope>IDENTIFICATION BY MASS SPECTROMETRY [LARGE SCALE ANALYSIS]</scope>
</reference>
<reference evidence="12" key="15">
    <citation type="journal article" date="2012" name="Mol. Cell">
        <title>Structure of a glomulin-RBX1-CUL1 complex: inhibition of a RING E3 ligase through masking of its E2-binding surface.</title>
        <authorList>
            <person name="Duda D.M."/>
            <person name="Olszewski J.L."/>
            <person name="Tron A.E."/>
            <person name="Hammel M."/>
            <person name="Lambert L.J."/>
            <person name="Waddell M.B."/>
            <person name="Mittag T."/>
            <person name="DeCaprio J.A."/>
            <person name="Schulman B.A."/>
        </authorList>
    </citation>
    <scope>X-RAY CRYSTALLOGRAPHY (3.00 ANGSTROMS) IN COMPLEX WITH RBX1 AND CUL1</scope>
    <scope>FUNCTION (ISOFORM 1)</scope>
    <scope>REGION</scope>
    <scope>DOMAIN</scope>
    <scope>INTERACTION WITH RBX1</scope>
    <scope>MUTAGENESIS OF LYS-425; ASN-476; LEU-567 AND ARG-574</scope>
</reference>
<comment type="function">
    <molecule>Isoform 1</molecule>
    <text evidence="1 3 4 7 8">Regulatory component of cullin-RING-based SCF (SKP1-Cullin-F-box protein) E3 ubiquitin-protein ligase complexes (PubMed:22405651, PubMed:22748924). Inhibits E3 ubiquitin ligase activity by binding to RBX1 (via RING domain) and inhibiting its interaction with the E2 ubiquitin-conjugating enzyme CDC34 (PubMed:22405651, PubMed:22748924). Inhibits RBX1-mediated neddylation of CUL1 (PubMed:22405651). Required for normal stability and normal cellular levels of key components of SCF ubiquitin ligase complexes, including FBXW7, RBX1, CUL1, CUL2, CUL3, CUL4A, and thereby contributes to the regulation of CCNE1 and MYC levels (By similarity). Essential for normal development of the vasculature (PubMed:11845407). Contributes to the regulation of RPS6KB1 phosphorylation (PubMed:11571281).</text>
</comment>
<comment type="subunit">
    <text evidence="2 3 5 6 7 8 9">Interacts with FKBP4 and FKBP1A (PubMed:11164950, PubMed:12604780, PubMed:8955134). Isoform 1: Interacts with RBX1 (via RING domain) (PubMed:22405651, PubMed:22748924). Identified in complexes that contain RBX1 plus one of the cullins CUL1, CUL2, CUL3, and CUL4A (PubMed:22405651, PubMed:22748924). Identified in a SCF complex composed of CUL1, RBX1, SKP1, FBXW7 and GLMN (PubMed:22405651). Component of a SCF-like complex consisting of CUL7, RBX1, SKP1, FBXW8 and GLMN (PubMed:12904573). Interacts with unphosphorylated MET and is released upon MET phosphorylation (PubMed:11571281).</text>
</comment>
<comment type="interaction">
    <interactant intactId="EBI-726150">
        <id>Q92990</id>
    </interactant>
    <interactant intactId="EBI-11525448">
        <id>O43281-2</id>
        <label>EFS</label>
    </interactant>
    <organismsDiffer>false</organismsDiffer>
    <experiments>3</experiments>
</comment>
<comment type="interaction">
    <interactant intactId="EBI-726150">
        <id>Q92990</id>
    </interactant>
    <interactant intactId="EBI-1047444">
        <id>Q02790</id>
        <label>FKBP4</label>
    </interactant>
    <organismsDiffer>false</organismsDiffer>
    <experiments>5</experiments>
</comment>
<comment type="interaction">
    <interactant intactId="EBI-726150">
        <id>Q92990</id>
    </interactant>
    <interactant intactId="EBI-12181987">
        <id>P50542-3</id>
        <label>PEX5</label>
    </interactant>
    <organismsDiffer>false</organismsDiffer>
    <experiments>3</experiments>
</comment>
<comment type="interaction">
    <interactant intactId="EBI-726150">
        <id>Q92990</id>
    </interactant>
    <interactant intactId="EBI-398523">
        <id>P62877</id>
        <label>RBX1</label>
    </interactant>
    <organismsDiffer>false</organismsDiffer>
    <experiments>7</experiments>
</comment>
<comment type="interaction">
    <interactant intactId="EBI-726150">
        <id>Q92990</id>
    </interactant>
    <interactant intactId="EBI-1045459">
        <id>O95863</id>
        <label>SNAI1</label>
    </interactant>
    <organismsDiffer>false</organismsDiffer>
    <experiments>3</experiments>
</comment>
<comment type="alternative products">
    <event type="alternative splicing"/>
    <isoform>
        <id>Q92990-1</id>
        <name>1</name>
        <name>FAP68</name>
        <name>FKBP-associated protein 68 kDa</name>
        <sequence type="displayed"/>
    </isoform>
    <isoform>
        <id>Q92990-2</id>
        <name>2</name>
        <name>FAP48</name>
        <name>FKBP-associated protein 48 kDa</name>
        <sequence type="described" ref="VSP_008882 VSP_008883"/>
    </isoform>
</comment>
<comment type="tissue specificity">
    <text evidence="4">Ubiquitous.</text>
</comment>
<comment type="domain">
    <text evidence="8">The C-terminal half of the protein is important for interaction with RBX1.</text>
</comment>
<comment type="PTM">
    <text evidence="3">Phosphorylated on tyrosine residues.</text>
</comment>
<comment type="disease" evidence="4 7">
    <disease id="DI-01668">
        <name>Glomuvenous malformations</name>
        <acronym>GVMs</acronym>
        <description>Characterized by the presence of smooth-muscle-like glomus cells in the media surrounding distended vascular lumens.</description>
        <dbReference type="MIM" id="138000"/>
    </disease>
    <text>The disease is caused by variants affecting the gene represented in this entry.</text>
</comment>
<comment type="online information" name="Atlas of Genetics and Cytogenetics in Oncology and Haematology">
    <link uri="https://atlasgeneticsoncology.org/gene/43022/GLMN"/>
</comment>
<accession>Q92990</accession>
<accession>Q5VVC3</accession>
<accession>Q9BVE8</accession>
<name>GLMN_HUMAN</name>
<protein>
    <recommendedName>
        <fullName>Glomulin</fullName>
    </recommendedName>
    <alternativeName>
        <fullName>FK506-binding protein-associated protein</fullName>
        <shortName>FAP</shortName>
    </alternativeName>
    <alternativeName>
        <fullName>FKBP-associated protein</fullName>
    </alternativeName>
</protein>
<sequence>MAVEELQSIIKRCQILEEQDFKEEDFGLFQLAGQRCIEEGHTDQLLEIIQNEKNKVIIKNMGWNLVGPVVRCLLCKDKEDSKRKVYFLIFDLLVKLCNPKELLLGLLELIEEPSGKQISQSILLLLQPLQTVIQKLHNKAYSIGLALSTLWNQLSLLPVPYSKEQIQMDDYGLCQCCKALIEFTKPFVEEVIDNKENSLENEKLKDELLKFCFKSLKCPLLTAQFFEQSEEGGNDPFRYFASEIIGFLSAIGHPFPKMIFNHGRKKRTWNYLEFEEEENKQLADSMASLAYLVFVQGIHIDQLPMVLSPLYLLQFNMGHIEVFLQRTEESVISKGLELLENSLLRIEDNSLLYQYLEIKSFLTVPQGLVKVMTLCPIETLRKKSLAMLQLYINKLDSQGKYTLFRCLLNTSNHSGVEAFIIQNIKNQIDMSLKRTRNNKWFTGPQLISLLDLVLFLPEGAETDLLQNSDRIMASLNLLRYLVIKDNENDNQTGLWTELGNIENNFLKPLHIGLNMSKAHYEAEIKNSQEAQKSKDLCSITVSGEEIPNMPPEMQLKVLHSALFTFDLIESVLARVEELIEIKTKSTSEENIGIK</sequence>
<keyword id="KW-0002">3D-structure</keyword>
<keyword id="KW-0007">Acetylation</keyword>
<keyword id="KW-0025">Alternative splicing</keyword>
<keyword id="KW-0225">Disease variant</keyword>
<keyword id="KW-0597">Phosphoprotein</keyword>
<keyword id="KW-1267">Proteomics identification</keyword>
<keyword id="KW-1185">Reference proteome</keyword>
<dbReference type="EMBL" id="U73704">
    <property type="protein sequence ID" value="AAC50908.1"/>
    <property type="molecule type" value="mRNA"/>
</dbReference>
<dbReference type="EMBL" id="AJ347709">
    <property type="protein sequence ID" value="CAC69882.1"/>
    <property type="molecule type" value="mRNA"/>
</dbReference>
<dbReference type="EMBL" id="AJ302735">
    <property type="protein sequence ID" value="CAC82938.1"/>
    <property type="molecule type" value="mRNA"/>
</dbReference>
<dbReference type="EMBL" id="AJ302727">
    <property type="protein sequence ID" value="CAC88124.1"/>
    <property type="molecule type" value="Genomic_DNA"/>
</dbReference>
<dbReference type="EMBL" id="AJ302728">
    <property type="protein sequence ID" value="CAC88124.1"/>
    <property type="status" value="JOINED"/>
    <property type="molecule type" value="Genomic_DNA"/>
</dbReference>
<dbReference type="EMBL" id="AJ302729">
    <property type="protein sequence ID" value="CAC88124.1"/>
    <property type="status" value="JOINED"/>
    <property type="molecule type" value="Genomic_DNA"/>
</dbReference>
<dbReference type="EMBL" id="AJ302730">
    <property type="protein sequence ID" value="CAC88124.1"/>
    <property type="status" value="JOINED"/>
    <property type="molecule type" value="Genomic_DNA"/>
</dbReference>
<dbReference type="EMBL" id="AJ302731">
    <property type="protein sequence ID" value="CAC88124.1"/>
    <property type="status" value="JOINED"/>
    <property type="molecule type" value="Genomic_DNA"/>
</dbReference>
<dbReference type="EMBL" id="AJ302732">
    <property type="protein sequence ID" value="CAC88124.1"/>
    <property type="status" value="JOINED"/>
    <property type="molecule type" value="Genomic_DNA"/>
</dbReference>
<dbReference type="EMBL" id="AJ302733">
    <property type="protein sequence ID" value="CAC88124.1"/>
    <property type="status" value="JOINED"/>
    <property type="molecule type" value="Genomic_DNA"/>
</dbReference>
<dbReference type="EMBL" id="AJ302734">
    <property type="protein sequence ID" value="CAC88124.1"/>
    <property type="status" value="JOINED"/>
    <property type="molecule type" value="Genomic_DNA"/>
</dbReference>
<dbReference type="EMBL" id="AL451010">
    <property type="status" value="NOT_ANNOTATED_CDS"/>
    <property type="molecule type" value="Genomic_DNA"/>
</dbReference>
<dbReference type="EMBL" id="CH471097">
    <property type="protein sequence ID" value="EAW73098.1"/>
    <property type="molecule type" value="Genomic_DNA"/>
</dbReference>
<dbReference type="EMBL" id="BC001257">
    <property type="protein sequence ID" value="AAH01257.1"/>
    <property type="molecule type" value="mRNA"/>
</dbReference>
<dbReference type="CCDS" id="CCDS738.1">
    <molecule id="Q92990-1"/>
</dbReference>
<dbReference type="RefSeq" id="NP_001306612.1">
    <property type="nucleotide sequence ID" value="NM_001319683.1"/>
</dbReference>
<dbReference type="RefSeq" id="NP_444504.1">
    <molecule id="Q92990-1"/>
    <property type="nucleotide sequence ID" value="NM_053274.3"/>
</dbReference>
<dbReference type="RefSeq" id="XP_011538848.1">
    <molecule id="Q92990-1"/>
    <property type="nucleotide sequence ID" value="XM_011540546.3"/>
</dbReference>
<dbReference type="RefSeq" id="XP_054189955.1">
    <molecule id="Q92990-1"/>
    <property type="nucleotide sequence ID" value="XM_054333980.1"/>
</dbReference>
<dbReference type="PDB" id="4F52">
    <property type="method" value="X-ray"/>
    <property type="resolution" value="3.00 A"/>
    <property type="chains" value="E/F=1-594"/>
</dbReference>
<dbReference type="PDBsum" id="4F52"/>
<dbReference type="SMR" id="Q92990"/>
<dbReference type="BioGRID" id="116318">
    <property type="interactions" value="180"/>
</dbReference>
<dbReference type="CORUM" id="Q92990"/>
<dbReference type="FunCoup" id="Q92990">
    <property type="interactions" value="1358"/>
</dbReference>
<dbReference type="IntAct" id="Q92990">
    <property type="interactions" value="115"/>
</dbReference>
<dbReference type="MINT" id="Q92990"/>
<dbReference type="STRING" id="9606.ENSP00000359385"/>
<dbReference type="BindingDB" id="Q92990"/>
<dbReference type="ChEMBL" id="CHEMBL5465342"/>
<dbReference type="GlyGen" id="Q92990">
    <property type="glycosylation" value="2 sites, 1 O-linked glycan (2 sites)"/>
</dbReference>
<dbReference type="iPTMnet" id="Q92990"/>
<dbReference type="PhosphoSitePlus" id="Q92990"/>
<dbReference type="SwissPalm" id="Q92990"/>
<dbReference type="BioMuta" id="GLMN"/>
<dbReference type="DMDM" id="38372884"/>
<dbReference type="jPOST" id="Q92990"/>
<dbReference type="MassIVE" id="Q92990"/>
<dbReference type="PaxDb" id="9606-ENSP00000359385"/>
<dbReference type="PeptideAtlas" id="Q92990"/>
<dbReference type="ProteomicsDB" id="75652">
    <molecule id="Q92990-1"/>
</dbReference>
<dbReference type="ProteomicsDB" id="75653">
    <molecule id="Q92990-2"/>
</dbReference>
<dbReference type="Pumba" id="Q92990"/>
<dbReference type="TopDownProteomics" id="Q92990-1">
    <molecule id="Q92990-1"/>
</dbReference>
<dbReference type="Antibodypedia" id="33642">
    <property type="antibodies" value="249 antibodies from 27 providers"/>
</dbReference>
<dbReference type="DNASU" id="11146"/>
<dbReference type="Ensembl" id="ENST00000370360.8">
    <molecule id="Q92990-1"/>
    <property type="protein sequence ID" value="ENSP00000359385.3"/>
    <property type="gene ID" value="ENSG00000174842.17"/>
</dbReference>
<dbReference type="Ensembl" id="ENST00000495106.5">
    <molecule id="Q92990-2"/>
    <property type="protein sequence ID" value="ENSP00000436829.1"/>
    <property type="gene ID" value="ENSG00000174842.17"/>
</dbReference>
<dbReference type="GeneID" id="11146"/>
<dbReference type="KEGG" id="hsa:11146"/>
<dbReference type="MANE-Select" id="ENST00000370360.8">
    <property type="protein sequence ID" value="ENSP00000359385.3"/>
    <property type="RefSeq nucleotide sequence ID" value="NM_053274.3"/>
    <property type="RefSeq protein sequence ID" value="NP_444504.1"/>
</dbReference>
<dbReference type="UCSC" id="uc001dor.4">
    <molecule id="Q92990-1"/>
    <property type="organism name" value="human"/>
</dbReference>
<dbReference type="AGR" id="HGNC:14373"/>
<dbReference type="CTD" id="11146"/>
<dbReference type="DisGeNET" id="11146"/>
<dbReference type="GeneCards" id="GLMN"/>
<dbReference type="HGNC" id="HGNC:14373">
    <property type="gene designation" value="GLMN"/>
</dbReference>
<dbReference type="HPA" id="ENSG00000174842">
    <property type="expression patterns" value="Tissue enhanced (retina)"/>
</dbReference>
<dbReference type="MalaCards" id="GLMN"/>
<dbReference type="MIM" id="138000">
    <property type="type" value="phenotype"/>
</dbReference>
<dbReference type="MIM" id="601749">
    <property type="type" value="gene"/>
</dbReference>
<dbReference type="neXtProt" id="NX_Q92990"/>
<dbReference type="OpenTargets" id="ENSG00000174842"/>
<dbReference type="Orphanet" id="83454">
    <property type="disease" value="Glomuvenous malformation"/>
</dbReference>
<dbReference type="PharmGKB" id="PA134870088"/>
<dbReference type="VEuPathDB" id="HostDB:ENSG00000174842"/>
<dbReference type="eggNOG" id="ENOG502QQAV">
    <property type="taxonomic scope" value="Eukaryota"/>
</dbReference>
<dbReference type="GeneTree" id="ENSGT00390000018446"/>
<dbReference type="HOGENOM" id="CLU_029654_3_0_1"/>
<dbReference type="InParanoid" id="Q92990"/>
<dbReference type="OMA" id="TLCPMEH"/>
<dbReference type="OrthoDB" id="619536at2759"/>
<dbReference type="PAN-GO" id="Q92990">
    <property type="GO annotations" value="2 GO annotations based on evolutionary models"/>
</dbReference>
<dbReference type="PhylomeDB" id="Q92990"/>
<dbReference type="TreeFam" id="TF105319"/>
<dbReference type="PathwayCommons" id="Q92990"/>
<dbReference type="Reactome" id="R-HSA-983168">
    <property type="pathway name" value="Antigen processing: Ubiquitination &amp; Proteasome degradation"/>
</dbReference>
<dbReference type="SignaLink" id="Q92990"/>
<dbReference type="SIGNOR" id="Q92990"/>
<dbReference type="BioGRID-ORCS" id="11146">
    <property type="hits" value="248 hits in 1157 CRISPR screens"/>
</dbReference>
<dbReference type="ChiTaRS" id="GLMN">
    <property type="organism name" value="human"/>
</dbReference>
<dbReference type="EvolutionaryTrace" id="Q92990"/>
<dbReference type="GeneWiki" id="GLMN"/>
<dbReference type="GenomeRNAi" id="11146"/>
<dbReference type="Pharos" id="Q92990">
    <property type="development level" value="Tbio"/>
</dbReference>
<dbReference type="PRO" id="PR:Q92990"/>
<dbReference type="Proteomes" id="UP000005640">
    <property type="component" value="Chromosome 1"/>
</dbReference>
<dbReference type="RNAct" id="Q92990">
    <property type="molecule type" value="protein"/>
</dbReference>
<dbReference type="Bgee" id="ENSG00000174842">
    <property type="expression patterns" value="Expressed in primordial germ cell in gonad and 172 other cell types or tissues"/>
</dbReference>
<dbReference type="ExpressionAtlas" id="Q92990">
    <property type="expression patterns" value="baseline and differential"/>
</dbReference>
<dbReference type="GO" id="GO:0031462">
    <property type="term" value="C:Cul2-RING ubiquitin ligase complex"/>
    <property type="evidence" value="ECO:0000353"/>
    <property type="project" value="MGI"/>
</dbReference>
<dbReference type="GO" id="GO:0031463">
    <property type="term" value="C:Cul3-RING ubiquitin ligase complex"/>
    <property type="evidence" value="ECO:0000353"/>
    <property type="project" value="MGI"/>
</dbReference>
<dbReference type="GO" id="GO:0031464">
    <property type="term" value="C:Cul4A-RING E3 ubiquitin ligase complex"/>
    <property type="evidence" value="ECO:0000353"/>
    <property type="project" value="MGI"/>
</dbReference>
<dbReference type="GO" id="GO:0031461">
    <property type="term" value="C:cullin-RING ubiquitin ligase complex"/>
    <property type="evidence" value="ECO:0000353"/>
    <property type="project" value="MGI"/>
</dbReference>
<dbReference type="GO" id="GO:0005737">
    <property type="term" value="C:cytoplasm"/>
    <property type="evidence" value="ECO:0000318"/>
    <property type="project" value="GO_Central"/>
</dbReference>
<dbReference type="GO" id="GO:0005171">
    <property type="term" value="F:hepatocyte growth factor receptor binding"/>
    <property type="evidence" value="ECO:0000314"/>
    <property type="project" value="MGI"/>
</dbReference>
<dbReference type="GO" id="GO:0005102">
    <property type="term" value="F:signaling receptor binding"/>
    <property type="evidence" value="ECO:0000314"/>
    <property type="project" value="MGI"/>
</dbReference>
<dbReference type="GO" id="GO:0031625">
    <property type="term" value="F:ubiquitin protein ligase binding"/>
    <property type="evidence" value="ECO:0000314"/>
    <property type="project" value="MGI"/>
</dbReference>
<dbReference type="GO" id="GO:0055105">
    <property type="term" value="F:ubiquitin-protein transferase inhibitor activity"/>
    <property type="evidence" value="ECO:0000316"/>
    <property type="project" value="MGI"/>
</dbReference>
<dbReference type="GO" id="GO:0007166">
    <property type="term" value="P:cell surface receptor signaling pathway"/>
    <property type="evidence" value="ECO:0000314"/>
    <property type="project" value="MGI"/>
</dbReference>
<dbReference type="GO" id="GO:0040029">
    <property type="term" value="P:epigenetic regulation of gene expression"/>
    <property type="evidence" value="ECO:0000315"/>
    <property type="project" value="UniProtKB"/>
</dbReference>
<dbReference type="GO" id="GO:0042692">
    <property type="term" value="P:muscle cell differentiation"/>
    <property type="evidence" value="ECO:0000315"/>
    <property type="project" value="UniProtKB"/>
</dbReference>
<dbReference type="GO" id="GO:0008285">
    <property type="term" value="P:negative regulation of cell population proliferation"/>
    <property type="evidence" value="ECO:0000314"/>
    <property type="project" value="MGI"/>
</dbReference>
<dbReference type="GO" id="GO:0042130">
    <property type="term" value="P:negative regulation of T cell proliferation"/>
    <property type="evidence" value="ECO:0000314"/>
    <property type="project" value="UniProtKB"/>
</dbReference>
<dbReference type="GO" id="GO:0001843">
    <property type="term" value="P:neural tube closure"/>
    <property type="evidence" value="ECO:0007669"/>
    <property type="project" value="Ensembl"/>
</dbReference>
<dbReference type="GO" id="GO:0001819">
    <property type="term" value="P:positive regulation of cytokine production"/>
    <property type="evidence" value="ECO:0000315"/>
    <property type="project" value="UniProtKB"/>
</dbReference>
<dbReference type="GO" id="GO:0032743">
    <property type="term" value="P:positive regulation of interleukin-2 production"/>
    <property type="evidence" value="ECO:0000314"/>
    <property type="project" value="MGI"/>
</dbReference>
<dbReference type="GO" id="GO:0042327">
    <property type="term" value="P:positive regulation of phosphorylation"/>
    <property type="evidence" value="ECO:0000314"/>
    <property type="project" value="UniProtKB"/>
</dbReference>
<dbReference type="GO" id="GO:0032434">
    <property type="term" value="P:regulation of proteasomal ubiquitin-dependent protein catabolic process"/>
    <property type="evidence" value="ECO:0000315"/>
    <property type="project" value="MGI"/>
</dbReference>
<dbReference type="GO" id="GO:0001570">
    <property type="term" value="P:vasculogenesis"/>
    <property type="evidence" value="ECO:0000315"/>
    <property type="project" value="UniProtKB"/>
</dbReference>
<dbReference type="IDEAL" id="IID00518"/>
<dbReference type="InterPro" id="IPR019516">
    <property type="entry name" value="Glomulin/ALF4"/>
</dbReference>
<dbReference type="InterPro" id="IPR013877">
    <property type="entry name" value="YAP-bd/ALF4/Glomulin"/>
</dbReference>
<dbReference type="PANTHER" id="PTHR15430">
    <property type="entry name" value="GLOMULIN"/>
    <property type="match status" value="1"/>
</dbReference>
<dbReference type="PANTHER" id="PTHR15430:SF1">
    <property type="entry name" value="GLOMULIN"/>
    <property type="match status" value="1"/>
</dbReference>
<dbReference type="Pfam" id="PF08568">
    <property type="entry name" value="Kinetochor_Ybp2"/>
    <property type="match status" value="1"/>
</dbReference>
<proteinExistence type="evidence at protein level"/>